<accession>Q14JS7</accession>
<keyword id="KW-0963">Cytoplasm</keyword>
<keyword id="KW-0489">Methyltransferase</keyword>
<keyword id="KW-0949">S-adenosyl-L-methionine</keyword>
<keyword id="KW-0808">Transferase</keyword>
<keyword id="KW-0819">tRNA processing</keyword>
<feature type="chain" id="PRO_0000257421" description="tRNA (guanine-N(1)-)-methyltransferase">
    <location>
        <begin position="1"/>
        <end position="254"/>
    </location>
</feature>
<feature type="binding site" evidence="1">
    <location>
        <position position="115"/>
    </location>
    <ligand>
        <name>S-adenosyl-L-methionine</name>
        <dbReference type="ChEBI" id="CHEBI:59789"/>
    </ligand>
</feature>
<feature type="binding site" evidence="1">
    <location>
        <begin position="135"/>
        <end position="140"/>
    </location>
    <ligand>
        <name>S-adenosyl-L-methionine</name>
        <dbReference type="ChEBI" id="CHEBI:59789"/>
    </ligand>
</feature>
<comment type="function">
    <text evidence="1">Specifically methylates guanosine-37 in various tRNAs.</text>
</comment>
<comment type="catalytic activity">
    <reaction evidence="1">
        <text>guanosine(37) in tRNA + S-adenosyl-L-methionine = N(1)-methylguanosine(37) in tRNA + S-adenosyl-L-homocysteine + H(+)</text>
        <dbReference type="Rhea" id="RHEA:36899"/>
        <dbReference type="Rhea" id="RHEA-COMP:10145"/>
        <dbReference type="Rhea" id="RHEA-COMP:10147"/>
        <dbReference type="ChEBI" id="CHEBI:15378"/>
        <dbReference type="ChEBI" id="CHEBI:57856"/>
        <dbReference type="ChEBI" id="CHEBI:59789"/>
        <dbReference type="ChEBI" id="CHEBI:73542"/>
        <dbReference type="ChEBI" id="CHEBI:74269"/>
        <dbReference type="EC" id="2.1.1.228"/>
    </reaction>
</comment>
<comment type="subunit">
    <text evidence="1">Homodimer.</text>
</comment>
<comment type="subcellular location">
    <subcellularLocation>
        <location evidence="1">Cytoplasm</location>
    </subcellularLocation>
</comment>
<comment type="similarity">
    <text evidence="1">Belongs to the RNA methyltransferase TrmD family.</text>
</comment>
<protein>
    <recommendedName>
        <fullName evidence="1">tRNA (guanine-N(1)-)-methyltransferase</fullName>
        <ecNumber evidence="1">2.1.1.228</ecNumber>
    </recommendedName>
    <alternativeName>
        <fullName evidence="1">M1G-methyltransferase</fullName>
    </alternativeName>
    <alternativeName>
        <fullName evidence="1">tRNA [GM37] methyltransferase</fullName>
    </alternativeName>
</protein>
<gene>
    <name evidence="1" type="primary">trmD</name>
    <name type="ordered locus">FTF0152</name>
</gene>
<organism>
    <name type="scientific">Francisella tularensis subsp. tularensis (strain FSC 198)</name>
    <dbReference type="NCBI Taxonomy" id="393115"/>
    <lineage>
        <taxon>Bacteria</taxon>
        <taxon>Pseudomonadati</taxon>
        <taxon>Pseudomonadota</taxon>
        <taxon>Gammaproteobacteria</taxon>
        <taxon>Thiotrichales</taxon>
        <taxon>Francisellaceae</taxon>
        <taxon>Francisella</taxon>
    </lineage>
</organism>
<reference key="1">
    <citation type="journal article" date="2007" name="PLoS ONE">
        <title>Genome sequencing shows that European isolates of Francisella tularensis subspecies tularensis are almost identical to US laboratory strain Schu S4.</title>
        <authorList>
            <person name="Chaudhuri R.R."/>
            <person name="Ren C.-P."/>
            <person name="Desmond L."/>
            <person name="Vincent G.A."/>
            <person name="Silman N.J."/>
            <person name="Brehm J.K."/>
            <person name="Elmore M.J."/>
            <person name="Hudson M.J."/>
            <person name="Forsman M."/>
            <person name="Isherwood K.E."/>
            <person name="Gurycova D."/>
            <person name="Minton N.P."/>
            <person name="Titball R.W."/>
            <person name="Pallen M.J."/>
            <person name="Vipond R."/>
        </authorList>
    </citation>
    <scope>NUCLEOTIDE SEQUENCE [LARGE SCALE GENOMIC DNA]</scope>
    <source>
        <strain>FSC 198</strain>
    </source>
</reference>
<proteinExistence type="inferred from homology"/>
<evidence type="ECO:0000255" key="1">
    <source>
        <dbReference type="HAMAP-Rule" id="MF_00605"/>
    </source>
</evidence>
<name>TRMD_FRAT1</name>
<sequence length="254" mass="28423">MKMKFGIISIFPEMFKAINDFGVTARAIKDSKVSISCFNPRDYTTDRHATVDDTSFGGGAGMVMKYQPLSAAIEDAKNTLGCGTKVVYLSPQGSIFNHRKAQELLQNDSLILLCGRYEGVDERLIQDYVDEEISVGDFVLSGGELPAMLVMDSLIRLLPEVLGNKESVVEDSFYDGLLDYPHYTKPAVLPNGNAVPDVLLSGNHKEIAKWRRKQKLIRTYERRKDLIECLCLSAKDKQILDDYKIDKVSTKGEE</sequence>
<dbReference type="EC" id="2.1.1.228" evidence="1"/>
<dbReference type="EMBL" id="AM286280">
    <property type="protein sequence ID" value="CAL08168.1"/>
    <property type="molecule type" value="Genomic_DNA"/>
</dbReference>
<dbReference type="SMR" id="Q14JS7"/>
<dbReference type="KEGG" id="ftf:FTF0152"/>
<dbReference type="HOGENOM" id="CLU_047363_0_1_6"/>
<dbReference type="GO" id="GO:0005829">
    <property type="term" value="C:cytosol"/>
    <property type="evidence" value="ECO:0007669"/>
    <property type="project" value="TreeGrafter"/>
</dbReference>
<dbReference type="GO" id="GO:0052906">
    <property type="term" value="F:tRNA (guanine(37)-N1)-methyltransferase activity"/>
    <property type="evidence" value="ECO:0007669"/>
    <property type="project" value="UniProtKB-UniRule"/>
</dbReference>
<dbReference type="GO" id="GO:0002939">
    <property type="term" value="P:tRNA N1-guanine methylation"/>
    <property type="evidence" value="ECO:0007669"/>
    <property type="project" value="TreeGrafter"/>
</dbReference>
<dbReference type="CDD" id="cd18080">
    <property type="entry name" value="TrmD-like"/>
    <property type="match status" value="1"/>
</dbReference>
<dbReference type="FunFam" id="1.10.1270.20:FF:000001">
    <property type="entry name" value="tRNA (guanine-N(1)-)-methyltransferase"/>
    <property type="match status" value="1"/>
</dbReference>
<dbReference type="FunFam" id="3.40.1280.10:FF:000001">
    <property type="entry name" value="tRNA (guanine-N(1)-)-methyltransferase"/>
    <property type="match status" value="1"/>
</dbReference>
<dbReference type="Gene3D" id="3.40.1280.10">
    <property type="match status" value="1"/>
</dbReference>
<dbReference type="Gene3D" id="1.10.1270.20">
    <property type="entry name" value="tRNA(m1g37)methyltransferase, domain 2"/>
    <property type="match status" value="1"/>
</dbReference>
<dbReference type="HAMAP" id="MF_00605">
    <property type="entry name" value="TrmD"/>
    <property type="match status" value="1"/>
</dbReference>
<dbReference type="InterPro" id="IPR029028">
    <property type="entry name" value="Alpha/beta_knot_MTases"/>
</dbReference>
<dbReference type="InterPro" id="IPR023148">
    <property type="entry name" value="tRNA_m1G_MeTrfase_C_sf"/>
</dbReference>
<dbReference type="InterPro" id="IPR002649">
    <property type="entry name" value="tRNA_m1G_MeTrfase_TrmD"/>
</dbReference>
<dbReference type="InterPro" id="IPR029026">
    <property type="entry name" value="tRNA_m1G_MTases_N"/>
</dbReference>
<dbReference type="InterPro" id="IPR016009">
    <property type="entry name" value="tRNA_MeTrfase_TRMD/TRM10"/>
</dbReference>
<dbReference type="NCBIfam" id="NF000648">
    <property type="entry name" value="PRK00026.1"/>
    <property type="match status" value="1"/>
</dbReference>
<dbReference type="NCBIfam" id="TIGR00088">
    <property type="entry name" value="trmD"/>
    <property type="match status" value="1"/>
</dbReference>
<dbReference type="PANTHER" id="PTHR46417">
    <property type="entry name" value="TRNA (GUANINE-N(1)-)-METHYLTRANSFERASE"/>
    <property type="match status" value="1"/>
</dbReference>
<dbReference type="PANTHER" id="PTHR46417:SF1">
    <property type="entry name" value="TRNA (GUANINE-N(1)-)-METHYLTRANSFERASE"/>
    <property type="match status" value="1"/>
</dbReference>
<dbReference type="Pfam" id="PF01746">
    <property type="entry name" value="tRNA_m1G_MT"/>
    <property type="match status" value="1"/>
</dbReference>
<dbReference type="PIRSF" id="PIRSF000386">
    <property type="entry name" value="tRNA_mtase"/>
    <property type="match status" value="1"/>
</dbReference>
<dbReference type="SUPFAM" id="SSF75217">
    <property type="entry name" value="alpha/beta knot"/>
    <property type="match status" value="1"/>
</dbReference>